<comment type="function">
    <text evidence="1">Plays a role in the regulation of innate resistance to pathogens, inflammatory reactions, possibly clearance of self-components and female fertility.</text>
</comment>
<comment type="subunit">
    <text evidence="1">Homooctamer; disulfide-linked. Binds to C1q (By similarity).</text>
</comment>
<comment type="subcellular location">
    <subcellularLocation>
        <location evidence="1">Secreted</location>
    </subcellularLocation>
</comment>
<reference key="1">
    <citation type="submission" date="2006-08" db="EMBL/GenBank/DDBJ databases">
        <authorList>
            <consortium name="NIH - Mammalian Gene Collection (MGC) project"/>
        </authorList>
    </citation>
    <scope>NUCLEOTIDE SEQUENCE [LARGE SCALE MRNA]</scope>
    <source>
        <strain>Hereford</strain>
        <tissue>Thymus</tissue>
    </source>
</reference>
<sequence length="382" mass="42021">MHISVILFCALWSAVSAENSDDYELMYVNLDNEIDNGLHPTEDPTPCDCSRENSEWDKLFTMLENSQMREGMLLQATDVMLRGELQKLQAELGRLEGSLQKLCGPEAPSETRLARALDDLLQASRDAGRRLARLEDAGALRPQEEAGRALGAVLEELRRTRADLRAVQGWAASRWLPAGCETAILFPMRSKKIFASVHPVTPMKLETFSACIWVKATEVLNKTVLFSYGTKRNPYEIQLYLSYRSIMLVVGGEENRLVADAVISLGTWTHLCSTWDSKKGHMALWVNGDSVATAVDMATGHVVPEGGILQIGQEKNGCCVGGGFDETLAFSGRLTGFNIWEGVLSNEEIREAGGAESCHIRGNVVGWGVTEIQPHGGAQYVY</sequence>
<dbReference type="EMBL" id="BC120175">
    <property type="protein sequence ID" value="AAI20176.1"/>
    <property type="molecule type" value="mRNA"/>
</dbReference>
<dbReference type="RefSeq" id="NP_001069727.1">
    <property type="nucleotide sequence ID" value="NM_001076259.2"/>
</dbReference>
<dbReference type="SMR" id="Q0VCG9"/>
<dbReference type="FunCoup" id="Q0VCG9">
    <property type="interactions" value="137"/>
</dbReference>
<dbReference type="STRING" id="9913.ENSBTAP00000011863"/>
<dbReference type="GlyCosmos" id="Q0VCG9">
    <property type="glycosylation" value="1 site, No reported glycans"/>
</dbReference>
<dbReference type="GlyGen" id="Q0VCG9">
    <property type="glycosylation" value="1 site"/>
</dbReference>
<dbReference type="PaxDb" id="9913-ENSBTAP00000011863"/>
<dbReference type="GeneID" id="541148"/>
<dbReference type="KEGG" id="bta:541148"/>
<dbReference type="CTD" id="5806"/>
<dbReference type="eggNOG" id="ENOG502QUBX">
    <property type="taxonomic scope" value="Eukaryota"/>
</dbReference>
<dbReference type="InParanoid" id="Q0VCG9"/>
<dbReference type="OrthoDB" id="10009351at2759"/>
<dbReference type="Proteomes" id="UP000009136">
    <property type="component" value="Unplaced"/>
</dbReference>
<dbReference type="GO" id="GO:0005615">
    <property type="term" value="C:extracellular space"/>
    <property type="evidence" value="ECO:0000318"/>
    <property type="project" value="GO_Central"/>
</dbReference>
<dbReference type="GO" id="GO:0001849">
    <property type="term" value="F:complement component C1q complex binding"/>
    <property type="evidence" value="ECO:0000318"/>
    <property type="project" value="GO_Central"/>
</dbReference>
<dbReference type="GO" id="GO:0045087">
    <property type="term" value="P:innate immune response"/>
    <property type="evidence" value="ECO:0000318"/>
    <property type="project" value="GO_Central"/>
</dbReference>
<dbReference type="GO" id="GO:0044793">
    <property type="term" value="P:negative regulation by host of viral process"/>
    <property type="evidence" value="ECO:0000318"/>
    <property type="project" value="GO_Central"/>
</dbReference>
<dbReference type="FunFam" id="2.60.120.200:FF:000110">
    <property type="entry name" value="pentraxin-related protein PTX3"/>
    <property type="match status" value="1"/>
</dbReference>
<dbReference type="Gene3D" id="2.60.120.200">
    <property type="match status" value="1"/>
</dbReference>
<dbReference type="InterPro" id="IPR013320">
    <property type="entry name" value="ConA-like_dom_sf"/>
</dbReference>
<dbReference type="InterPro" id="IPR030476">
    <property type="entry name" value="Pentaxin_CS"/>
</dbReference>
<dbReference type="InterPro" id="IPR001759">
    <property type="entry name" value="Pentraxin-related"/>
</dbReference>
<dbReference type="InterPro" id="IPR042837">
    <property type="entry name" value="PTX3"/>
</dbReference>
<dbReference type="PANTHER" id="PTHR46943">
    <property type="entry name" value="PENTRAXIN-RELATED PROTEIN PTX3"/>
    <property type="match status" value="1"/>
</dbReference>
<dbReference type="PANTHER" id="PTHR46943:SF1">
    <property type="entry name" value="PENTRAXIN-RELATED PROTEIN PTX3"/>
    <property type="match status" value="1"/>
</dbReference>
<dbReference type="Pfam" id="PF00354">
    <property type="entry name" value="Pentaxin"/>
    <property type="match status" value="1"/>
</dbReference>
<dbReference type="PRINTS" id="PR00895">
    <property type="entry name" value="PENTAXIN"/>
</dbReference>
<dbReference type="SMART" id="SM00159">
    <property type="entry name" value="PTX"/>
    <property type="match status" value="1"/>
</dbReference>
<dbReference type="SUPFAM" id="SSF49899">
    <property type="entry name" value="Concanavalin A-like lectins/glucanases"/>
    <property type="match status" value="1"/>
</dbReference>
<dbReference type="PROSITE" id="PS00289">
    <property type="entry name" value="PTX_1"/>
    <property type="match status" value="1"/>
</dbReference>
<dbReference type="PROSITE" id="PS51828">
    <property type="entry name" value="PTX_2"/>
    <property type="match status" value="1"/>
</dbReference>
<feature type="signal peptide" evidence="2">
    <location>
        <begin position="1"/>
        <end position="17"/>
    </location>
</feature>
<feature type="chain" id="PRO_0000313023" description="Pentraxin-related protein PTX3">
    <location>
        <begin position="18"/>
        <end position="382"/>
    </location>
</feature>
<feature type="domain" description="Pentraxin (PTX)" evidence="3">
    <location>
        <begin position="180"/>
        <end position="382"/>
    </location>
</feature>
<feature type="coiled-coil region" evidence="2">
    <location>
        <begin position="79"/>
        <end position="137"/>
    </location>
</feature>
<feature type="glycosylation site" description="N-linked (GlcNAc...) asparagine" evidence="2">
    <location>
        <position position="221"/>
    </location>
</feature>
<feature type="disulfide bond" description="Interchain" evidence="1">
    <location>
        <position position="47"/>
    </location>
</feature>
<feature type="disulfide bond" description="Interchain" evidence="1">
    <location>
        <position position="49"/>
    </location>
</feature>
<feature type="disulfide bond" description="Interchain" evidence="1">
    <location>
        <position position="103"/>
    </location>
</feature>
<feature type="disulfide bond" evidence="1">
    <location>
        <begin position="180"/>
        <end position="358"/>
    </location>
</feature>
<feature type="disulfide bond" evidence="3">
    <location>
        <begin position="211"/>
        <end position="272"/>
    </location>
</feature>
<feature type="disulfide bond" description="Interchain" evidence="1">
    <location>
        <position position="318"/>
    </location>
</feature>
<feature type="disulfide bond" description="Interchain" evidence="1">
    <location>
        <position position="319"/>
    </location>
</feature>
<protein>
    <recommendedName>
        <fullName>Pentraxin-related protein PTX3</fullName>
    </recommendedName>
    <alternativeName>
        <fullName>Pentaxin-related protein PTX3</fullName>
    </alternativeName>
</protein>
<name>PTX3_BOVIN</name>
<organism>
    <name type="scientific">Bos taurus</name>
    <name type="common">Bovine</name>
    <dbReference type="NCBI Taxonomy" id="9913"/>
    <lineage>
        <taxon>Eukaryota</taxon>
        <taxon>Metazoa</taxon>
        <taxon>Chordata</taxon>
        <taxon>Craniata</taxon>
        <taxon>Vertebrata</taxon>
        <taxon>Euteleostomi</taxon>
        <taxon>Mammalia</taxon>
        <taxon>Eutheria</taxon>
        <taxon>Laurasiatheria</taxon>
        <taxon>Artiodactyla</taxon>
        <taxon>Ruminantia</taxon>
        <taxon>Pecora</taxon>
        <taxon>Bovidae</taxon>
        <taxon>Bovinae</taxon>
        <taxon>Bos</taxon>
    </lineage>
</organism>
<keyword id="KW-0175">Coiled coil</keyword>
<keyword id="KW-1015">Disulfide bond</keyword>
<keyword id="KW-0325">Glycoprotein</keyword>
<keyword id="KW-1185">Reference proteome</keyword>
<keyword id="KW-0964">Secreted</keyword>
<keyword id="KW-0732">Signal</keyword>
<accession>Q0VCG9</accession>
<evidence type="ECO:0000250" key="1"/>
<evidence type="ECO:0000255" key="2"/>
<evidence type="ECO:0000255" key="3">
    <source>
        <dbReference type="PROSITE-ProRule" id="PRU01172"/>
    </source>
</evidence>
<gene>
    <name type="primary">PTX3</name>
</gene>
<proteinExistence type="evidence at transcript level"/>